<accession>Q9RI18</accession>
<accession>O68689</accession>
<dbReference type="EMBL" id="AF074612">
    <property type="protein sequence ID" value="AAC69771.1"/>
    <property type="molecule type" value="Genomic_DNA"/>
</dbReference>
<dbReference type="EMBL" id="AF053946">
    <property type="protein sequence ID" value="AAC62568.1"/>
    <property type="molecule type" value="Genomic_DNA"/>
</dbReference>
<dbReference type="EMBL" id="AL117189">
    <property type="protein sequence ID" value="CAB54941.1"/>
    <property type="status" value="ALT_INIT"/>
    <property type="molecule type" value="Genomic_DNA"/>
</dbReference>
<dbReference type="EMBL" id="AE017043">
    <property type="protein sequence ID" value="AAS58538.1"/>
    <property type="status" value="ALT_INIT"/>
    <property type="molecule type" value="Genomic_DNA"/>
</dbReference>
<dbReference type="PIR" id="T43561">
    <property type="entry name" value="T43561"/>
</dbReference>
<dbReference type="RefSeq" id="NP_857718.1">
    <property type="nucleotide sequence ID" value="NC_004836.1"/>
</dbReference>
<dbReference type="RefSeq" id="NP_857913.1">
    <property type="nucleotide sequence ID" value="NC_004839.1"/>
</dbReference>
<dbReference type="PaxDb" id="214092-5832484"/>
<dbReference type="DNASU" id="1149277"/>
<dbReference type="EnsemblBacteria" id="AAS58538">
    <property type="protein sequence ID" value="AAS58538"/>
    <property type="gene ID" value="YP_pCD19"/>
</dbReference>
<dbReference type="KEGG" id="ype:YPCD1.64"/>
<dbReference type="KEGG" id="ypm:YP_pCD19"/>
<dbReference type="eggNOG" id="COG2801">
    <property type="taxonomic scope" value="Bacteria"/>
</dbReference>
<dbReference type="HOGENOM" id="CLU_027402_31_3_6"/>
<dbReference type="Proteomes" id="UP000000815">
    <property type="component" value="Plasmid pCD1"/>
</dbReference>
<dbReference type="Proteomes" id="UP000001019">
    <property type="component" value="Plasmid pCD1"/>
</dbReference>
<dbReference type="PANTHER" id="PTHR47515:SF2">
    <property type="entry name" value="INTEGRASE CORE DOMAIN PROTEIN"/>
    <property type="match status" value="1"/>
</dbReference>
<dbReference type="PANTHER" id="PTHR47515">
    <property type="entry name" value="LOW CALCIUM RESPONSE LOCUS PROTEIN T"/>
    <property type="match status" value="1"/>
</dbReference>
<reference key="1">
    <citation type="journal article" date="1998" name="Infect. Immun.">
        <title>DNA sequencing and analysis of the low-Ca2+-response plasmid pCD1 of Yersinia pestis KIM5.</title>
        <authorList>
            <person name="Perry R.D."/>
            <person name="Straley S.C."/>
            <person name="Fetherston J.D."/>
            <person name="Rose D.J."/>
            <person name="Gregor J."/>
            <person name="Blattner F.R."/>
        </authorList>
    </citation>
    <scope>NUCLEOTIDE SEQUENCE [GENOMIC DNA]</scope>
    <source>
        <strain>KIM5 / Biovar Mediaevalis</strain>
    </source>
</reference>
<reference key="2">
    <citation type="journal article" date="1998" name="J. Bacteriol.">
        <title>Structural organization of virulence-associated plasmids of Yersinia pestis.</title>
        <authorList>
            <person name="Hu P."/>
            <person name="Elliott J."/>
            <person name="McCready P."/>
            <person name="Skowronski E."/>
            <person name="Garnes J."/>
            <person name="Kobayashi A."/>
            <person name="Brubaker R.R."/>
            <person name="Garcia E."/>
        </authorList>
    </citation>
    <scope>NUCLEOTIDE SEQUENCE [GENOMIC DNA]</scope>
    <source>
        <strain>KIM5 / Biovar Mediaevalis</strain>
    </source>
</reference>
<reference key="3">
    <citation type="journal article" date="2001" name="Nature">
        <title>Genome sequence of Yersinia pestis, the causative agent of plague.</title>
        <authorList>
            <person name="Parkhill J."/>
            <person name="Wren B.W."/>
            <person name="Thomson N.R."/>
            <person name="Titball R.W."/>
            <person name="Holden M.T.G."/>
            <person name="Prentice M.B."/>
            <person name="Sebaihia M."/>
            <person name="James K.D."/>
            <person name="Churcher C.M."/>
            <person name="Mungall K.L."/>
            <person name="Baker S."/>
            <person name="Basham D."/>
            <person name="Bentley S.D."/>
            <person name="Brooks K."/>
            <person name="Cerdeno-Tarraga A.-M."/>
            <person name="Chillingworth T."/>
            <person name="Cronin A."/>
            <person name="Davies R.M."/>
            <person name="Davis P."/>
            <person name="Dougan G."/>
            <person name="Feltwell T."/>
            <person name="Hamlin N."/>
            <person name="Holroyd S."/>
            <person name="Jagels K."/>
            <person name="Karlyshev A.V."/>
            <person name="Leather S."/>
            <person name="Moule S."/>
            <person name="Oyston P.C.F."/>
            <person name="Quail M.A."/>
            <person name="Rutherford K.M."/>
            <person name="Simmonds M."/>
            <person name="Skelton J."/>
            <person name="Stevens K."/>
            <person name="Whitehead S."/>
            <person name="Barrell B.G."/>
        </authorList>
    </citation>
    <scope>NUCLEOTIDE SEQUENCE [LARGE SCALE GENOMIC DNA]</scope>
    <source>
        <strain>CO-92 / Biovar Orientalis</strain>
    </source>
</reference>
<reference key="4">
    <citation type="journal article" date="2004" name="DNA Res.">
        <title>Complete genome sequence of Yersinia pestis strain 91001, an isolate avirulent to humans.</title>
        <authorList>
            <person name="Song Y."/>
            <person name="Tong Z."/>
            <person name="Wang J."/>
            <person name="Wang L."/>
            <person name="Guo Z."/>
            <person name="Han Y."/>
            <person name="Zhang J."/>
            <person name="Pei D."/>
            <person name="Zhou D."/>
            <person name="Qin H."/>
            <person name="Pang X."/>
            <person name="Han Y."/>
            <person name="Zhai J."/>
            <person name="Li M."/>
            <person name="Cui B."/>
            <person name="Qi Z."/>
            <person name="Jin L."/>
            <person name="Dai R."/>
            <person name="Chen F."/>
            <person name="Li S."/>
            <person name="Ye C."/>
            <person name="Du Z."/>
            <person name="Lin W."/>
            <person name="Wang J."/>
            <person name="Yu J."/>
            <person name="Yang H."/>
            <person name="Wang J."/>
            <person name="Huang P."/>
            <person name="Yang R."/>
        </authorList>
    </citation>
    <scope>NUCLEOTIDE SEQUENCE [LARGE SCALE GENOMIC DNA]</scope>
    <source>
        <strain>91001 / Biovar Mediaevalis</strain>
    </source>
</reference>
<proteinExistence type="predicted"/>
<evidence type="ECO:0000305" key="1"/>
<keyword id="KW-0614">Plasmid</keyword>
<keyword id="KW-1185">Reference proteome</keyword>
<protein>
    <recommendedName>
        <fullName>Low calcium response locus protein T</fullName>
    </recommendedName>
</protein>
<sequence>MTEYQASERRGCRIMGISRSLLHYCPNTARDIPVVEVLQKLAHQYPAYGFGLMFNKLRQSGLPWNVKRVYRVYRLLKLNFRRKGKKRLPNRHPQPLAIPLKMNHCWSVDFMSDALTDGRRFRLFNVVEILTGKHWQLKLT</sequence>
<feature type="chain" id="PRO_0000084378" description="Low calcium response locus protein T">
    <location>
        <begin position="1"/>
        <end position="140"/>
    </location>
</feature>
<feature type="sequence variant" description="In strain: KIM5.">
    <original>LTGKHWQLKLT</original>
    <variation>FVNDG</variation>
    <location>
        <begin position="130"/>
        <end position="140"/>
    </location>
</feature>
<name>LCRT_YERPE</name>
<geneLocation type="plasmid">
    <name>pCD1</name>
</geneLocation>
<comment type="sequence caution" evidence="1">
    <conflict type="erroneous initiation">
        <sequence resource="EMBL-CDS" id="AAS58538"/>
    </conflict>
</comment>
<comment type="sequence caution" evidence="1">
    <conflict type="erroneous initiation">
        <sequence resource="EMBL-CDS" id="CAB54941"/>
    </conflict>
</comment>
<gene>
    <name type="primary">lcrT</name>
    <name type="ordered locus">YPCD1.64</name>
    <name type="ordered locus">YP_pCD19</name>
</gene>
<organism>
    <name type="scientific">Yersinia pestis</name>
    <dbReference type="NCBI Taxonomy" id="632"/>
    <lineage>
        <taxon>Bacteria</taxon>
        <taxon>Pseudomonadati</taxon>
        <taxon>Pseudomonadota</taxon>
        <taxon>Gammaproteobacteria</taxon>
        <taxon>Enterobacterales</taxon>
        <taxon>Yersiniaceae</taxon>
        <taxon>Yersinia</taxon>
    </lineage>
</organism>